<comment type="function">
    <text evidence="1">Transcriptional repressor that controls expression of the genes required for the catabolism of sialic acids.</text>
</comment>
<comment type="similarity">
    <text evidence="1">Belongs to the NanR family.</text>
</comment>
<protein>
    <recommendedName>
        <fullName evidence="1">HTH-type transcriptional repressor NanR</fullName>
    </recommendedName>
</protein>
<proteinExistence type="inferred from homology"/>
<name>NANR_ECO81</name>
<sequence>MSPMNAFDPQAEDSTTTIGRNLRSRPLARKKLSEMVEEELEQMIRRREFGEGEQLPSERELMAFFNVGRPSVREALAALKRKGLVQINNGERARVSRPSADTIIGELSGMAKDFLSHPGGIAHFEQLRLFFESSLVRYAAEHATDEQIDLLAKALEINSQSLDNNAAFIRSDVDFHRVLAEIPGNPIFMAIHVALLDWLIAARPTVADQALHEHNNVSYQQHIAIVDAIRRHDPDEADRALQSHLNSVSATWHAFGQTTNKKK</sequence>
<accession>B7N0Z9</accession>
<dbReference type="EMBL" id="CU928162">
    <property type="protein sequence ID" value="CAR10017.2"/>
    <property type="molecule type" value="Genomic_DNA"/>
</dbReference>
<dbReference type="RefSeq" id="WP_000074795.1">
    <property type="nucleotide sequence ID" value="NC_011745.1"/>
</dbReference>
<dbReference type="SMR" id="B7N0Z9"/>
<dbReference type="KEGG" id="ecq:ECED1_3877"/>
<dbReference type="HOGENOM" id="CLU_017584_9_1_6"/>
<dbReference type="Proteomes" id="UP000000748">
    <property type="component" value="Chromosome"/>
</dbReference>
<dbReference type="GO" id="GO:0003677">
    <property type="term" value="F:DNA binding"/>
    <property type="evidence" value="ECO:0007669"/>
    <property type="project" value="UniProtKB-KW"/>
</dbReference>
<dbReference type="GO" id="GO:0003700">
    <property type="term" value="F:DNA-binding transcription factor activity"/>
    <property type="evidence" value="ECO:0007669"/>
    <property type="project" value="UniProtKB-UniRule"/>
</dbReference>
<dbReference type="GO" id="GO:0045892">
    <property type="term" value="P:negative regulation of DNA-templated transcription"/>
    <property type="evidence" value="ECO:0007669"/>
    <property type="project" value="UniProtKB-UniRule"/>
</dbReference>
<dbReference type="CDD" id="cd07377">
    <property type="entry name" value="WHTH_GntR"/>
    <property type="match status" value="1"/>
</dbReference>
<dbReference type="FunFam" id="1.10.10.10:FF:000150">
    <property type="entry name" value="HTH-type transcriptional repressor NanR"/>
    <property type="match status" value="1"/>
</dbReference>
<dbReference type="FunFam" id="1.20.120.530:FF:000006">
    <property type="entry name" value="HTH-type transcriptional repressor NanR"/>
    <property type="match status" value="1"/>
</dbReference>
<dbReference type="Gene3D" id="1.20.120.530">
    <property type="entry name" value="GntR ligand-binding domain-like"/>
    <property type="match status" value="1"/>
</dbReference>
<dbReference type="Gene3D" id="1.10.10.10">
    <property type="entry name" value="Winged helix-like DNA-binding domain superfamily/Winged helix DNA-binding domain"/>
    <property type="match status" value="1"/>
</dbReference>
<dbReference type="HAMAP" id="MF_01236">
    <property type="entry name" value="HTH_NanR"/>
    <property type="match status" value="1"/>
</dbReference>
<dbReference type="InterPro" id="IPR011711">
    <property type="entry name" value="GntR_C"/>
</dbReference>
<dbReference type="InterPro" id="IPR008920">
    <property type="entry name" value="TF_FadR/GntR_C"/>
</dbReference>
<dbReference type="InterPro" id="IPR000524">
    <property type="entry name" value="Tscrpt_reg_HTH_GntR"/>
</dbReference>
<dbReference type="InterPro" id="IPR023730">
    <property type="entry name" value="Tscrpt_reg_NanR"/>
</dbReference>
<dbReference type="InterPro" id="IPR036388">
    <property type="entry name" value="WH-like_DNA-bd_sf"/>
</dbReference>
<dbReference type="InterPro" id="IPR036390">
    <property type="entry name" value="WH_DNA-bd_sf"/>
</dbReference>
<dbReference type="NCBIfam" id="NF003011">
    <property type="entry name" value="PRK03837.1"/>
    <property type="match status" value="1"/>
</dbReference>
<dbReference type="PANTHER" id="PTHR43537:SF53">
    <property type="entry name" value="HTH-TYPE TRANSCRIPTIONAL REPRESSOR NANR"/>
    <property type="match status" value="1"/>
</dbReference>
<dbReference type="PANTHER" id="PTHR43537">
    <property type="entry name" value="TRANSCRIPTIONAL REGULATOR, GNTR FAMILY"/>
    <property type="match status" value="1"/>
</dbReference>
<dbReference type="Pfam" id="PF07729">
    <property type="entry name" value="FCD"/>
    <property type="match status" value="1"/>
</dbReference>
<dbReference type="Pfam" id="PF00392">
    <property type="entry name" value="GntR"/>
    <property type="match status" value="1"/>
</dbReference>
<dbReference type="PRINTS" id="PR00035">
    <property type="entry name" value="HTHGNTR"/>
</dbReference>
<dbReference type="SMART" id="SM00895">
    <property type="entry name" value="FCD"/>
    <property type="match status" value="1"/>
</dbReference>
<dbReference type="SMART" id="SM00345">
    <property type="entry name" value="HTH_GNTR"/>
    <property type="match status" value="1"/>
</dbReference>
<dbReference type="SUPFAM" id="SSF48008">
    <property type="entry name" value="GntR ligand-binding domain-like"/>
    <property type="match status" value="1"/>
</dbReference>
<dbReference type="SUPFAM" id="SSF46785">
    <property type="entry name" value="Winged helix' DNA-binding domain"/>
    <property type="match status" value="1"/>
</dbReference>
<dbReference type="PROSITE" id="PS50949">
    <property type="entry name" value="HTH_GNTR"/>
    <property type="match status" value="1"/>
</dbReference>
<gene>
    <name evidence="1" type="primary">nanR</name>
    <name type="ordered locus">ECED1_3877</name>
</gene>
<organism>
    <name type="scientific">Escherichia coli O81 (strain ED1a)</name>
    <dbReference type="NCBI Taxonomy" id="585397"/>
    <lineage>
        <taxon>Bacteria</taxon>
        <taxon>Pseudomonadati</taxon>
        <taxon>Pseudomonadota</taxon>
        <taxon>Gammaproteobacteria</taxon>
        <taxon>Enterobacterales</taxon>
        <taxon>Enterobacteriaceae</taxon>
        <taxon>Escherichia</taxon>
    </lineage>
</organism>
<keyword id="KW-0238">DNA-binding</keyword>
<keyword id="KW-0678">Repressor</keyword>
<keyword id="KW-0804">Transcription</keyword>
<keyword id="KW-0805">Transcription regulation</keyword>
<reference key="1">
    <citation type="journal article" date="2009" name="PLoS Genet.">
        <title>Organised genome dynamics in the Escherichia coli species results in highly diverse adaptive paths.</title>
        <authorList>
            <person name="Touchon M."/>
            <person name="Hoede C."/>
            <person name="Tenaillon O."/>
            <person name="Barbe V."/>
            <person name="Baeriswyl S."/>
            <person name="Bidet P."/>
            <person name="Bingen E."/>
            <person name="Bonacorsi S."/>
            <person name="Bouchier C."/>
            <person name="Bouvet O."/>
            <person name="Calteau A."/>
            <person name="Chiapello H."/>
            <person name="Clermont O."/>
            <person name="Cruveiller S."/>
            <person name="Danchin A."/>
            <person name="Diard M."/>
            <person name="Dossat C."/>
            <person name="Karoui M.E."/>
            <person name="Frapy E."/>
            <person name="Garry L."/>
            <person name="Ghigo J.M."/>
            <person name="Gilles A.M."/>
            <person name="Johnson J."/>
            <person name="Le Bouguenec C."/>
            <person name="Lescat M."/>
            <person name="Mangenot S."/>
            <person name="Martinez-Jehanne V."/>
            <person name="Matic I."/>
            <person name="Nassif X."/>
            <person name="Oztas S."/>
            <person name="Petit M.A."/>
            <person name="Pichon C."/>
            <person name="Rouy Z."/>
            <person name="Ruf C.S."/>
            <person name="Schneider D."/>
            <person name="Tourret J."/>
            <person name="Vacherie B."/>
            <person name="Vallenet D."/>
            <person name="Medigue C."/>
            <person name="Rocha E.P.C."/>
            <person name="Denamur E."/>
        </authorList>
    </citation>
    <scope>NUCLEOTIDE SEQUENCE [LARGE SCALE GENOMIC DNA]</scope>
    <source>
        <strain>ED1a</strain>
    </source>
</reference>
<evidence type="ECO:0000255" key="1">
    <source>
        <dbReference type="HAMAP-Rule" id="MF_01236"/>
    </source>
</evidence>
<evidence type="ECO:0000256" key="2">
    <source>
        <dbReference type="SAM" id="MobiDB-lite"/>
    </source>
</evidence>
<feature type="chain" id="PRO_1000165001" description="HTH-type transcriptional repressor NanR">
    <location>
        <begin position="1"/>
        <end position="263"/>
    </location>
</feature>
<feature type="domain" description="HTH gntR-type" evidence="1">
    <location>
        <begin position="30"/>
        <end position="98"/>
    </location>
</feature>
<feature type="DNA-binding region" description="H-T-H motif" evidence="1">
    <location>
        <begin position="58"/>
        <end position="77"/>
    </location>
</feature>
<feature type="region of interest" description="Disordered" evidence="2">
    <location>
        <begin position="1"/>
        <end position="23"/>
    </location>
</feature>